<dbReference type="EMBL" id="AP009384">
    <property type="protein sequence ID" value="BAF88537.1"/>
    <property type="molecule type" value="Genomic_DNA"/>
</dbReference>
<dbReference type="RefSeq" id="WP_012171065.1">
    <property type="nucleotide sequence ID" value="NC_009937.1"/>
</dbReference>
<dbReference type="SMR" id="A8IAP9"/>
<dbReference type="STRING" id="438753.AZC_2539"/>
<dbReference type="KEGG" id="azc:AZC_2539"/>
<dbReference type="eggNOG" id="COG0097">
    <property type="taxonomic scope" value="Bacteria"/>
</dbReference>
<dbReference type="HOGENOM" id="CLU_065464_1_2_5"/>
<dbReference type="Proteomes" id="UP000000270">
    <property type="component" value="Chromosome"/>
</dbReference>
<dbReference type="GO" id="GO:0022625">
    <property type="term" value="C:cytosolic large ribosomal subunit"/>
    <property type="evidence" value="ECO:0007669"/>
    <property type="project" value="TreeGrafter"/>
</dbReference>
<dbReference type="GO" id="GO:0019843">
    <property type="term" value="F:rRNA binding"/>
    <property type="evidence" value="ECO:0007669"/>
    <property type="project" value="UniProtKB-UniRule"/>
</dbReference>
<dbReference type="GO" id="GO:0003735">
    <property type="term" value="F:structural constituent of ribosome"/>
    <property type="evidence" value="ECO:0007669"/>
    <property type="project" value="InterPro"/>
</dbReference>
<dbReference type="GO" id="GO:0002181">
    <property type="term" value="P:cytoplasmic translation"/>
    <property type="evidence" value="ECO:0007669"/>
    <property type="project" value="TreeGrafter"/>
</dbReference>
<dbReference type="FunFam" id="3.90.930.12:FF:000001">
    <property type="entry name" value="50S ribosomal protein L6"/>
    <property type="match status" value="1"/>
</dbReference>
<dbReference type="Gene3D" id="3.90.930.12">
    <property type="entry name" value="Ribosomal protein L6, alpha-beta domain"/>
    <property type="match status" value="2"/>
</dbReference>
<dbReference type="HAMAP" id="MF_01365_B">
    <property type="entry name" value="Ribosomal_uL6_B"/>
    <property type="match status" value="1"/>
</dbReference>
<dbReference type="InterPro" id="IPR000702">
    <property type="entry name" value="Ribosomal_uL6-like"/>
</dbReference>
<dbReference type="InterPro" id="IPR036789">
    <property type="entry name" value="Ribosomal_uL6-like_a/b-dom_sf"/>
</dbReference>
<dbReference type="InterPro" id="IPR020040">
    <property type="entry name" value="Ribosomal_uL6_a/b-dom"/>
</dbReference>
<dbReference type="InterPro" id="IPR019906">
    <property type="entry name" value="Ribosomal_uL6_bac-type"/>
</dbReference>
<dbReference type="InterPro" id="IPR002358">
    <property type="entry name" value="Ribosomal_uL6_CS"/>
</dbReference>
<dbReference type="NCBIfam" id="TIGR03654">
    <property type="entry name" value="L6_bact"/>
    <property type="match status" value="1"/>
</dbReference>
<dbReference type="PANTHER" id="PTHR11655">
    <property type="entry name" value="60S/50S RIBOSOMAL PROTEIN L6/L9"/>
    <property type="match status" value="1"/>
</dbReference>
<dbReference type="PANTHER" id="PTHR11655:SF14">
    <property type="entry name" value="LARGE RIBOSOMAL SUBUNIT PROTEIN UL6M"/>
    <property type="match status" value="1"/>
</dbReference>
<dbReference type="Pfam" id="PF00347">
    <property type="entry name" value="Ribosomal_L6"/>
    <property type="match status" value="2"/>
</dbReference>
<dbReference type="PIRSF" id="PIRSF002162">
    <property type="entry name" value="Ribosomal_L6"/>
    <property type="match status" value="1"/>
</dbReference>
<dbReference type="PRINTS" id="PR00059">
    <property type="entry name" value="RIBOSOMALL6"/>
</dbReference>
<dbReference type="SUPFAM" id="SSF56053">
    <property type="entry name" value="Ribosomal protein L6"/>
    <property type="match status" value="2"/>
</dbReference>
<dbReference type="PROSITE" id="PS00525">
    <property type="entry name" value="RIBOSOMAL_L6_1"/>
    <property type="match status" value="1"/>
</dbReference>
<accession>A8IAP9</accession>
<comment type="function">
    <text evidence="1">This protein binds to the 23S rRNA, and is important in its secondary structure. It is located near the subunit interface in the base of the L7/L12 stalk, and near the tRNA binding site of the peptidyltransferase center.</text>
</comment>
<comment type="subunit">
    <text evidence="1">Part of the 50S ribosomal subunit.</text>
</comment>
<comment type="similarity">
    <text evidence="1">Belongs to the universal ribosomal protein uL6 family.</text>
</comment>
<organism>
    <name type="scientific">Azorhizobium caulinodans (strain ATCC 43989 / DSM 5975 / JCM 20966 / LMG 6465 / NBRC 14845 / NCIMB 13405 / ORS 571)</name>
    <dbReference type="NCBI Taxonomy" id="438753"/>
    <lineage>
        <taxon>Bacteria</taxon>
        <taxon>Pseudomonadati</taxon>
        <taxon>Pseudomonadota</taxon>
        <taxon>Alphaproteobacteria</taxon>
        <taxon>Hyphomicrobiales</taxon>
        <taxon>Xanthobacteraceae</taxon>
        <taxon>Azorhizobium</taxon>
    </lineage>
</organism>
<gene>
    <name evidence="1" type="primary">rplF</name>
    <name type="ordered locus">AZC_2539</name>
</gene>
<evidence type="ECO:0000255" key="1">
    <source>
        <dbReference type="HAMAP-Rule" id="MF_01365"/>
    </source>
</evidence>
<evidence type="ECO:0000305" key="2"/>
<keyword id="KW-1185">Reference proteome</keyword>
<keyword id="KW-0687">Ribonucleoprotein</keyword>
<keyword id="KW-0689">Ribosomal protein</keyword>
<keyword id="KW-0694">RNA-binding</keyword>
<keyword id="KW-0699">rRNA-binding</keyword>
<protein>
    <recommendedName>
        <fullName evidence="1">Large ribosomal subunit protein uL6</fullName>
    </recommendedName>
    <alternativeName>
        <fullName evidence="2">50S ribosomal protein L6</fullName>
    </alternativeName>
</protein>
<proteinExistence type="inferred from homology"/>
<sequence>MSKIGKHPVAIPAGVTASVDGQTVKVKGPKGALEVVLVEEIQASLEGGELKIAMRGETPRHKSMWGMSRTLVANLVEGVTKGFEKKLEINGVGYKAAVAGKNLQLSLGYSHDVIYPIPEGIQIAAPKPTELVVTGINKQQVGQVAAEIREFRGPEPYKGKGVKYAGEFIFRKEGKKK</sequence>
<reference key="1">
    <citation type="submission" date="2007-04" db="EMBL/GenBank/DDBJ databases">
        <title>Complete genome sequence of the nitrogen-fixing bacterium Azorhizobium caulinodans ORS571.</title>
        <authorList>
            <person name="Lee K.B."/>
            <person name="Backer P.D."/>
            <person name="Aono T."/>
            <person name="Liu C.T."/>
            <person name="Suzuki S."/>
            <person name="Suzuki T."/>
            <person name="Kaneko T."/>
            <person name="Yamada M."/>
            <person name="Tabata S."/>
            <person name="Kupfer D.M."/>
            <person name="Najar F.Z."/>
            <person name="Wiley G.B."/>
            <person name="Roe B."/>
            <person name="Binnewies T."/>
            <person name="Ussery D."/>
            <person name="Vereecke D."/>
            <person name="Gevers D."/>
            <person name="Holsters M."/>
            <person name="Oyaizu H."/>
        </authorList>
    </citation>
    <scope>NUCLEOTIDE SEQUENCE [LARGE SCALE GENOMIC DNA]</scope>
    <source>
        <strain>ATCC 43989 / DSM 5975 / JCM 20966 / LMG 6465 / NBRC 14845 / NCIMB 13405 / ORS 571</strain>
    </source>
</reference>
<name>RL6_AZOC5</name>
<feature type="chain" id="PRO_1000073400" description="Large ribosomal subunit protein uL6">
    <location>
        <begin position="1"/>
        <end position="177"/>
    </location>
</feature>